<protein>
    <recommendedName>
        <fullName>T-cell surface glycoprotein YE1/48</fullName>
    </recommendedName>
    <alternativeName>
        <fullName>Lymphocyte antigen 49a</fullName>
        <shortName>Ly-49a</shortName>
    </alternativeName>
    <alternativeName>
        <fullName>T lymphocyte antigen A1</fullName>
    </alternativeName>
</protein>
<feature type="chain" id="PRO_0000046679" description="T-cell surface glycoprotein YE1/48">
    <location>
        <begin position="1"/>
        <end position="262"/>
    </location>
</feature>
<feature type="topological domain" description="Cytoplasmic" evidence="4">
    <location>
        <begin position="1"/>
        <end position="44"/>
    </location>
</feature>
<feature type="transmembrane region" description="Helical; Signal-anchor for type II membrane protein" evidence="1">
    <location>
        <begin position="45"/>
        <end position="66"/>
    </location>
</feature>
<feature type="topological domain" description="Extracellular" evidence="4">
    <location>
        <begin position="67"/>
        <end position="262"/>
    </location>
</feature>
<feature type="domain" description="C-type lectin" evidence="2">
    <location>
        <begin position="138"/>
        <end position="257"/>
    </location>
</feature>
<feature type="short sequence motif" description="Cell attachment site">
    <location>
        <begin position="137"/>
        <end position="139"/>
    </location>
</feature>
<feature type="glycosylation site" description="N-linked (GlcNAc...) asparagine" evidence="1">
    <location>
        <position position="86"/>
    </location>
</feature>
<feature type="glycosylation site" description="N-linked (GlcNAc...) asparagine" evidence="1">
    <location>
        <position position="103"/>
    </location>
</feature>
<feature type="glycosylation site" description="N-linked (GlcNAc...) asparagine" evidence="1">
    <location>
        <position position="123"/>
    </location>
</feature>
<feature type="disulfide bond" evidence="2 3">
    <location>
        <begin position="145"/>
        <end position="150"/>
    </location>
</feature>
<feature type="disulfide bond" evidence="2 3">
    <location>
        <begin position="163"/>
        <end position="251"/>
    </location>
</feature>
<feature type="disulfide bond" evidence="2 3">
    <location>
        <begin position="167"/>
        <end position="253"/>
    </location>
</feature>
<feature type="disulfide bond" evidence="2 3">
    <location>
        <begin position="232"/>
        <end position="245"/>
    </location>
</feature>
<feature type="sequence conflict" description="In Ref. 2; AAA37242." evidence="4" ref="2">
    <original>NCE</original>
    <variation>KLQ</variation>
    <location>
        <begin position="76"/>
        <end position="78"/>
    </location>
</feature>
<feature type="sequence conflict" description="In Ref. 2; AAA37242." evidence="4" ref="2">
    <original>I</original>
    <variation>M</variation>
    <location>
        <position position="106"/>
    </location>
</feature>
<feature type="sequence conflict" description="In Ref. 2; AAA40578/AAA37242." evidence="4" ref="2">
    <original>A</original>
    <variation>T</variation>
    <location>
        <position position="166"/>
    </location>
</feature>
<feature type="sequence conflict" description="In Ref. 2; AAA37242." evidence="4" ref="2">
    <original>G</original>
    <variation>R</variation>
    <location>
        <position position="223"/>
    </location>
</feature>
<feature type="strand" evidence="5">
    <location>
        <begin position="141"/>
        <end position="146"/>
    </location>
</feature>
<feature type="strand" evidence="5">
    <location>
        <begin position="149"/>
        <end position="158"/>
    </location>
</feature>
<feature type="helix" evidence="5">
    <location>
        <begin position="160"/>
        <end position="169"/>
    </location>
</feature>
<feature type="helix" evidence="5">
    <location>
        <begin position="180"/>
        <end position="189"/>
    </location>
</feature>
<feature type="strand" evidence="5">
    <location>
        <begin position="195"/>
        <end position="202"/>
    </location>
</feature>
<feature type="helix" evidence="5">
    <location>
        <begin position="203"/>
        <end position="205"/>
    </location>
</feature>
<feature type="strand" evidence="5">
    <location>
        <begin position="207"/>
        <end position="210"/>
    </location>
</feature>
<feature type="helix" evidence="5">
    <location>
        <begin position="227"/>
        <end position="229"/>
    </location>
</feature>
<feature type="strand" evidence="5">
    <location>
        <begin position="231"/>
        <end position="235"/>
    </location>
</feature>
<feature type="strand" evidence="5">
    <location>
        <begin position="240"/>
        <end position="243"/>
    </location>
</feature>
<feature type="strand" evidence="5">
    <location>
        <begin position="249"/>
        <end position="256"/>
    </location>
</feature>
<name>KLRA1_MOUSE</name>
<organism>
    <name type="scientific">Mus musculus</name>
    <name type="common">Mouse</name>
    <dbReference type="NCBI Taxonomy" id="10090"/>
    <lineage>
        <taxon>Eukaryota</taxon>
        <taxon>Metazoa</taxon>
        <taxon>Chordata</taxon>
        <taxon>Craniata</taxon>
        <taxon>Vertebrata</taxon>
        <taxon>Euteleostomi</taxon>
        <taxon>Mammalia</taxon>
        <taxon>Eutheria</taxon>
        <taxon>Euarchontoglires</taxon>
        <taxon>Glires</taxon>
        <taxon>Rodentia</taxon>
        <taxon>Myomorpha</taxon>
        <taxon>Muroidea</taxon>
        <taxon>Muridae</taxon>
        <taxon>Murinae</taxon>
        <taxon>Mus</taxon>
        <taxon>Mus</taxon>
    </lineage>
</organism>
<evidence type="ECO:0000255" key="1"/>
<evidence type="ECO:0000255" key="2">
    <source>
        <dbReference type="PROSITE-ProRule" id="PRU00040"/>
    </source>
</evidence>
<evidence type="ECO:0000269" key="3">
    <source>
    </source>
</evidence>
<evidence type="ECO:0000305" key="4"/>
<evidence type="ECO:0007829" key="5">
    <source>
        <dbReference type="PDB" id="1QO3"/>
    </source>
</evidence>
<reference key="1">
    <citation type="journal article" date="1989" name="J. Immunol.">
        <title>Molecular cloning and characterization of a novel murine T cell surface antigen, YE1/48.</title>
        <authorList>
            <person name="Chan P.-Y."/>
            <person name="Takei F."/>
        </authorList>
    </citation>
    <scope>NUCLEOTIDE SEQUENCE [MRNA]</scope>
</reference>
<reference key="2">
    <citation type="journal article" date="1989" name="J. Immunol.">
        <title>A murine T lymphocyte antigen belongs to a supergene family of type II integral membrane proteins.</title>
        <authorList>
            <person name="Yokoyama W.M."/>
            <person name="Jacobs L."/>
            <person name="Kanagawa O."/>
            <person name="Shevach E.M."/>
            <person name="Cohen D.I."/>
        </authorList>
    </citation>
    <scope>NUCLEOTIDE SEQUENCE [MRNA]</scope>
</reference>
<reference key="3">
    <citation type="journal article" date="1999" name="Nature">
        <title>Crystal structure of a lectin-like natural killer cell receptor bound to its MHC class I ligand.</title>
        <authorList>
            <person name="Tormo J."/>
            <person name="Natarajan K."/>
            <person name="Margulies D.H."/>
            <person name="Mariuzza R.A."/>
        </authorList>
    </citation>
    <scope>X-RAY CRYSTALLOGRAPHY (2.3 ANGSTROMS) OF 127-262 IN COMPLEX WITH UNGLYCOSYLATED H-2D</scope>
    <scope>SUBUNIT</scope>
    <scope>DISULFIDE BONDS</scope>
</reference>
<accession>P20937</accession>
<comment type="function">
    <text>Receptor on natural killer (NK) cells for H-2d alleles. Inhibits the activity of NK cells thus preventing cell lysis.</text>
</comment>
<comment type="subunit">
    <text evidence="3">Homodimer; disulfide-linked.</text>
</comment>
<comment type="subcellular location">
    <subcellularLocation>
        <location>Membrane</location>
        <topology>Single-pass type II membrane protein</topology>
    </subcellularLocation>
</comment>
<comment type="tissue specificity">
    <text>High, in T-lymphoma lines, very low in normal lymphocytes.</text>
</comment>
<proteinExistence type="evidence at protein level"/>
<gene>
    <name type="primary">Klra1</name>
    <name type="synonym">Ly-49</name>
    <name type="synonym">Ly-49a</name>
    <name type="synonym">Ly49</name>
    <name type="synonym">Ly49A</name>
</gene>
<dbReference type="EMBL" id="M25775">
    <property type="protein sequence ID" value="AAA40578.1"/>
    <property type="status" value="ALT_SEQ"/>
    <property type="molecule type" value="mRNA"/>
</dbReference>
<dbReference type="EMBL" id="M25812">
    <property type="protein sequence ID" value="AAA37242.1"/>
    <property type="molecule type" value="mRNA"/>
</dbReference>
<dbReference type="CCDS" id="CCDS20602.1"/>
<dbReference type="PIR" id="A30573">
    <property type="entry name" value="A30573"/>
</dbReference>
<dbReference type="PIR" id="A45813">
    <property type="entry name" value="A45813"/>
</dbReference>
<dbReference type="PDB" id="1QO3">
    <property type="method" value="X-ray"/>
    <property type="resolution" value="2.30 A"/>
    <property type="chains" value="C/D=126-262"/>
</dbReference>
<dbReference type="PDBsum" id="1QO3"/>
<dbReference type="SMR" id="P20937"/>
<dbReference type="FunCoup" id="P20937">
    <property type="interactions" value="391"/>
</dbReference>
<dbReference type="STRING" id="10090.ENSMUSP00000032288"/>
<dbReference type="GlyCosmos" id="P20937">
    <property type="glycosylation" value="3 sites, No reported glycans"/>
</dbReference>
<dbReference type="GlyGen" id="P20937">
    <property type="glycosylation" value="3 sites"/>
</dbReference>
<dbReference type="PaxDb" id="10090-ENSMUSP00000032288"/>
<dbReference type="ProteomicsDB" id="263556"/>
<dbReference type="AGR" id="MGI:101907"/>
<dbReference type="MGI" id="MGI:101907">
    <property type="gene designation" value="Klra1"/>
</dbReference>
<dbReference type="eggNOG" id="KOG4297">
    <property type="taxonomic scope" value="Eukaryota"/>
</dbReference>
<dbReference type="InParanoid" id="P20937"/>
<dbReference type="OrthoDB" id="2142683at2759"/>
<dbReference type="PhylomeDB" id="P20937"/>
<dbReference type="ChiTaRS" id="Klra1">
    <property type="organism name" value="mouse"/>
</dbReference>
<dbReference type="EvolutionaryTrace" id="P20937"/>
<dbReference type="PRO" id="PR:P20937"/>
<dbReference type="Proteomes" id="UP000000589">
    <property type="component" value="Unplaced"/>
</dbReference>
<dbReference type="RNAct" id="P20937">
    <property type="molecule type" value="protein"/>
</dbReference>
<dbReference type="GO" id="GO:0009897">
    <property type="term" value="C:external side of plasma membrane"/>
    <property type="evidence" value="ECO:0000314"/>
    <property type="project" value="MGI"/>
</dbReference>
<dbReference type="GO" id="GO:0005886">
    <property type="term" value="C:plasma membrane"/>
    <property type="evidence" value="ECO:0000304"/>
    <property type="project" value="MGI"/>
</dbReference>
<dbReference type="GO" id="GO:0030246">
    <property type="term" value="F:carbohydrate binding"/>
    <property type="evidence" value="ECO:0007669"/>
    <property type="project" value="UniProtKB-KW"/>
</dbReference>
<dbReference type="GO" id="GO:0038023">
    <property type="term" value="F:signaling receptor activity"/>
    <property type="evidence" value="ECO:0000314"/>
    <property type="project" value="MGI"/>
</dbReference>
<dbReference type="GO" id="GO:0007155">
    <property type="term" value="P:cell adhesion"/>
    <property type="evidence" value="ECO:0007669"/>
    <property type="project" value="UniProtKB-KW"/>
</dbReference>
<dbReference type="CDD" id="cd03593">
    <property type="entry name" value="CLECT_NK_receptors_like"/>
    <property type="match status" value="1"/>
</dbReference>
<dbReference type="FunFam" id="3.10.100.10:FF:000053">
    <property type="entry name" value="Killer cell lectin-like receptor 3"/>
    <property type="match status" value="1"/>
</dbReference>
<dbReference type="Gene3D" id="3.10.100.10">
    <property type="entry name" value="Mannose-Binding Protein A, subunit A"/>
    <property type="match status" value="1"/>
</dbReference>
<dbReference type="InterPro" id="IPR001304">
    <property type="entry name" value="C-type_lectin-like"/>
</dbReference>
<dbReference type="InterPro" id="IPR016186">
    <property type="entry name" value="C-type_lectin-like/link_sf"/>
</dbReference>
<dbReference type="InterPro" id="IPR016187">
    <property type="entry name" value="CTDL_fold"/>
</dbReference>
<dbReference type="InterPro" id="IPR013600">
    <property type="entry name" value="Ly49_N"/>
</dbReference>
<dbReference type="InterPro" id="IPR052013">
    <property type="entry name" value="Mouse_KLRs"/>
</dbReference>
<dbReference type="InterPro" id="IPR033992">
    <property type="entry name" value="NKR-like_CTLD"/>
</dbReference>
<dbReference type="PANTHER" id="PTHR46329">
    <property type="entry name" value="KILLER CELL LECTIN-LIKE RECEPTOR 2"/>
    <property type="match status" value="1"/>
</dbReference>
<dbReference type="PANTHER" id="PTHR46329:SF6">
    <property type="entry name" value="KILLER CELL LECTIN-LIKE RECEPTOR 4-RELATED"/>
    <property type="match status" value="1"/>
</dbReference>
<dbReference type="Pfam" id="PF00059">
    <property type="entry name" value="Lectin_C"/>
    <property type="match status" value="1"/>
</dbReference>
<dbReference type="Pfam" id="PF08391">
    <property type="entry name" value="Ly49"/>
    <property type="match status" value="1"/>
</dbReference>
<dbReference type="SMART" id="SM00034">
    <property type="entry name" value="CLECT"/>
    <property type="match status" value="1"/>
</dbReference>
<dbReference type="SUPFAM" id="SSF56436">
    <property type="entry name" value="C-type lectin-like"/>
    <property type="match status" value="1"/>
</dbReference>
<dbReference type="PROSITE" id="PS50041">
    <property type="entry name" value="C_TYPE_LECTIN_2"/>
    <property type="match status" value="1"/>
</dbReference>
<sequence>MSEQEVTYSMVRFHKSAGLQKQVRPEETKGPREAGYRRCSFHWKFIVIALGIFCFLLLVAVSVLAIKIFQYDQQKNCEEFLNHHNNCSNMQSDINLKDEMLKNKSIECDLLESLNRDQNRLYNKTKTVLDSLQHTGRGDKVYWFCYGMKCYYFVMDRKTWSGCKQACQSSSLSLLKIDDEDELKFLQLVVPSDSCWVGLSYDNKKKDWAWIDNRPSKLALNTGKYNIRDGGCMLLSKTRLDNGNCDQVFICICGKRLDKFPH</sequence>
<keyword id="KW-0002">3D-structure</keyword>
<keyword id="KW-0130">Cell adhesion</keyword>
<keyword id="KW-1015">Disulfide bond</keyword>
<keyword id="KW-0325">Glycoprotein</keyword>
<keyword id="KW-0430">Lectin</keyword>
<keyword id="KW-0472">Membrane</keyword>
<keyword id="KW-0675">Receptor</keyword>
<keyword id="KW-1185">Reference proteome</keyword>
<keyword id="KW-0735">Signal-anchor</keyword>
<keyword id="KW-0812">Transmembrane</keyword>
<keyword id="KW-1133">Transmembrane helix</keyword>